<proteinExistence type="inferred from homology"/>
<feature type="chain" id="PRO_1000124279" description="4-hydroxy-3-methylbut-2-enyl diphosphate reductase">
    <location>
        <begin position="1"/>
        <end position="319"/>
    </location>
</feature>
<feature type="active site" description="Proton donor" evidence="1">
    <location>
        <position position="126"/>
    </location>
</feature>
<feature type="binding site" evidence="1">
    <location>
        <position position="12"/>
    </location>
    <ligand>
        <name>[4Fe-4S] cluster</name>
        <dbReference type="ChEBI" id="CHEBI:49883"/>
    </ligand>
</feature>
<feature type="binding site" evidence="1">
    <location>
        <position position="41"/>
    </location>
    <ligand>
        <name>(2E)-4-hydroxy-3-methylbut-2-enyl diphosphate</name>
        <dbReference type="ChEBI" id="CHEBI:128753"/>
    </ligand>
</feature>
<feature type="binding site" evidence="1">
    <location>
        <position position="41"/>
    </location>
    <ligand>
        <name>dimethylallyl diphosphate</name>
        <dbReference type="ChEBI" id="CHEBI:57623"/>
    </ligand>
</feature>
<feature type="binding site" evidence="1">
    <location>
        <position position="41"/>
    </location>
    <ligand>
        <name>isopentenyl diphosphate</name>
        <dbReference type="ChEBI" id="CHEBI:128769"/>
    </ligand>
</feature>
<feature type="binding site" evidence="1">
    <location>
        <position position="74"/>
    </location>
    <ligand>
        <name>(2E)-4-hydroxy-3-methylbut-2-enyl diphosphate</name>
        <dbReference type="ChEBI" id="CHEBI:128753"/>
    </ligand>
</feature>
<feature type="binding site" evidence="1">
    <location>
        <position position="74"/>
    </location>
    <ligand>
        <name>dimethylallyl diphosphate</name>
        <dbReference type="ChEBI" id="CHEBI:57623"/>
    </ligand>
</feature>
<feature type="binding site" evidence="1">
    <location>
        <position position="74"/>
    </location>
    <ligand>
        <name>isopentenyl diphosphate</name>
        <dbReference type="ChEBI" id="CHEBI:128769"/>
    </ligand>
</feature>
<feature type="binding site" evidence="1">
    <location>
        <position position="96"/>
    </location>
    <ligand>
        <name>[4Fe-4S] cluster</name>
        <dbReference type="ChEBI" id="CHEBI:49883"/>
    </ligand>
</feature>
<feature type="binding site" evidence="1">
    <location>
        <position position="124"/>
    </location>
    <ligand>
        <name>(2E)-4-hydroxy-3-methylbut-2-enyl diphosphate</name>
        <dbReference type="ChEBI" id="CHEBI:128753"/>
    </ligand>
</feature>
<feature type="binding site" evidence="1">
    <location>
        <position position="124"/>
    </location>
    <ligand>
        <name>dimethylallyl diphosphate</name>
        <dbReference type="ChEBI" id="CHEBI:57623"/>
    </ligand>
</feature>
<feature type="binding site" evidence="1">
    <location>
        <position position="124"/>
    </location>
    <ligand>
        <name>isopentenyl diphosphate</name>
        <dbReference type="ChEBI" id="CHEBI:128769"/>
    </ligand>
</feature>
<feature type="binding site" evidence="1">
    <location>
        <position position="167"/>
    </location>
    <ligand>
        <name>(2E)-4-hydroxy-3-methylbut-2-enyl diphosphate</name>
        <dbReference type="ChEBI" id="CHEBI:128753"/>
    </ligand>
</feature>
<feature type="binding site" evidence="1">
    <location>
        <position position="197"/>
    </location>
    <ligand>
        <name>[4Fe-4S] cluster</name>
        <dbReference type="ChEBI" id="CHEBI:49883"/>
    </ligand>
</feature>
<feature type="binding site" evidence="1">
    <location>
        <position position="225"/>
    </location>
    <ligand>
        <name>(2E)-4-hydroxy-3-methylbut-2-enyl diphosphate</name>
        <dbReference type="ChEBI" id="CHEBI:128753"/>
    </ligand>
</feature>
<feature type="binding site" evidence="1">
    <location>
        <position position="225"/>
    </location>
    <ligand>
        <name>dimethylallyl diphosphate</name>
        <dbReference type="ChEBI" id="CHEBI:57623"/>
    </ligand>
</feature>
<feature type="binding site" evidence="1">
    <location>
        <position position="225"/>
    </location>
    <ligand>
        <name>isopentenyl diphosphate</name>
        <dbReference type="ChEBI" id="CHEBI:128769"/>
    </ligand>
</feature>
<feature type="binding site" evidence="1">
    <location>
        <position position="226"/>
    </location>
    <ligand>
        <name>(2E)-4-hydroxy-3-methylbut-2-enyl diphosphate</name>
        <dbReference type="ChEBI" id="CHEBI:128753"/>
    </ligand>
</feature>
<feature type="binding site" evidence="1">
    <location>
        <position position="226"/>
    </location>
    <ligand>
        <name>dimethylallyl diphosphate</name>
        <dbReference type="ChEBI" id="CHEBI:57623"/>
    </ligand>
</feature>
<feature type="binding site" evidence="1">
    <location>
        <position position="226"/>
    </location>
    <ligand>
        <name>isopentenyl diphosphate</name>
        <dbReference type="ChEBI" id="CHEBI:128769"/>
    </ligand>
</feature>
<feature type="binding site" evidence="1">
    <location>
        <position position="227"/>
    </location>
    <ligand>
        <name>(2E)-4-hydroxy-3-methylbut-2-enyl diphosphate</name>
        <dbReference type="ChEBI" id="CHEBI:128753"/>
    </ligand>
</feature>
<feature type="binding site" evidence="1">
    <location>
        <position position="227"/>
    </location>
    <ligand>
        <name>dimethylallyl diphosphate</name>
        <dbReference type="ChEBI" id="CHEBI:57623"/>
    </ligand>
</feature>
<feature type="binding site" evidence="1">
    <location>
        <position position="227"/>
    </location>
    <ligand>
        <name>isopentenyl diphosphate</name>
        <dbReference type="ChEBI" id="CHEBI:128769"/>
    </ligand>
</feature>
<feature type="binding site" evidence="1">
    <location>
        <position position="269"/>
    </location>
    <ligand>
        <name>(2E)-4-hydroxy-3-methylbut-2-enyl diphosphate</name>
        <dbReference type="ChEBI" id="CHEBI:128753"/>
    </ligand>
</feature>
<feature type="binding site" evidence="1">
    <location>
        <position position="269"/>
    </location>
    <ligand>
        <name>dimethylallyl diphosphate</name>
        <dbReference type="ChEBI" id="CHEBI:57623"/>
    </ligand>
</feature>
<feature type="binding site" evidence="1">
    <location>
        <position position="269"/>
    </location>
    <ligand>
        <name>isopentenyl diphosphate</name>
        <dbReference type="ChEBI" id="CHEBI:128769"/>
    </ligand>
</feature>
<comment type="function">
    <text evidence="1">Catalyzes the conversion of 1-hydroxy-2-methyl-2-(E)-butenyl 4-diphosphate (HMBPP) into a mixture of isopentenyl diphosphate (IPP) and dimethylallyl diphosphate (DMAPP). Acts in the terminal step of the DOXP/MEP pathway for isoprenoid precursor biosynthesis.</text>
</comment>
<comment type="catalytic activity">
    <reaction evidence="1">
        <text>isopentenyl diphosphate + 2 oxidized [2Fe-2S]-[ferredoxin] + H2O = (2E)-4-hydroxy-3-methylbut-2-enyl diphosphate + 2 reduced [2Fe-2S]-[ferredoxin] + 2 H(+)</text>
        <dbReference type="Rhea" id="RHEA:24488"/>
        <dbReference type="Rhea" id="RHEA-COMP:10000"/>
        <dbReference type="Rhea" id="RHEA-COMP:10001"/>
        <dbReference type="ChEBI" id="CHEBI:15377"/>
        <dbReference type="ChEBI" id="CHEBI:15378"/>
        <dbReference type="ChEBI" id="CHEBI:33737"/>
        <dbReference type="ChEBI" id="CHEBI:33738"/>
        <dbReference type="ChEBI" id="CHEBI:128753"/>
        <dbReference type="ChEBI" id="CHEBI:128769"/>
        <dbReference type="EC" id="1.17.7.4"/>
    </reaction>
</comment>
<comment type="catalytic activity">
    <reaction evidence="1">
        <text>dimethylallyl diphosphate + 2 oxidized [2Fe-2S]-[ferredoxin] + H2O = (2E)-4-hydroxy-3-methylbut-2-enyl diphosphate + 2 reduced [2Fe-2S]-[ferredoxin] + 2 H(+)</text>
        <dbReference type="Rhea" id="RHEA:24825"/>
        <dbReference type="Rhea" id="RHEA-COMP:10000"/>
        <dbReference type="Rhea" id="RHEA-COMP:10001"/>
        <dbReference type="ChEBI" id="CHEBI:15377"/>
        <dbReference type="ChEBI" id="CHEBI:15378"/>
        <dbReference type="ChEBI" id="CHEBI:33737"/>
        <dbReference type="ChEBI" id="CHEBI:33738"/>
        <dbReference type="ChEBI" id="CHEBI:57623"/>
        <dbReference type="ChEBI" id="CHEBI:128753"/>
        <dbReference type="EC" id="1.17.7.4"/>
    </reaction>
</comment>
<comment type="cofactor">
    <cofactor evidence="1">
        <name>[4Fe-4S] cluster</name>
        <dbReference type="ChEBI" id="CHEBI:49883"/>
    </cofactor>
    <text evidence="1">Binds 1 [4Fe-4S] cluster per subunit.</text>
</comment>
<comment type="pathway">
    <text evidence="1">Isoprenoid biosynthesis; dimethylallyl diphosphate biosynthesis; dimethylallyl diphosphate from (2E)-4-hydroxy-3-methylbutenyl diphosphate: step 1/1.</text>
</comment>
<comment type="pathway">
    <text evidence="1">Isoprenoid biosynthesis; isopentenyl diphosphate biosynthesis via DXP pathway; isopentenyl diphosphate from 1-deoxy-D-xylulose 5-phosphate: step 6/6.</text>
</comment>
<comment type="subunit">
    <text evidence="1">Homodimer.</text>
</comment>
<comment type="similarity">
    <text evidence="1">Belongs to the IspH family.</text>
</comment>
<organism>
    <name type="scientific">Buchnera aphidicola subsp. Acyrthosiphon pisum (strain Tuc7)</name>
    <dbReference type="NCBI Taxonomy" id="561501"/>
    <lineage>
        <taxon>Bacteria</taxon>
        <taxon>Pseudomonadati</taxon>
        <taxon>Pseudomonadota</taxon>
        <taxon>Gammaproteobacteria</taxon>
        <taxon>Enterobacterales</taxon>
        <taxon>Erwiniaceae</taxon>
        <taxon>Buchnera</taxon>
    </lineage>
</organism>
<evidence type="ECO:0000255" key="1">
    <source>
        <dbReference type="HAMAP-Rule" id="MF_00191"/>
    </source>
</evidence>
<reference key="1">
    <citation type="journal article" date="2009" name="Science">
        <title>The dynamics and time scale of ongoing genomic erosion in symbiotic bacteria.</title>
        <authorList>
            <person name="Moran N.A."/>
            <person name="McLaughlin H.J."/>
            <person name="Sorek R."/>
        </authorList>
    </citation>
    <scope>NUCLEOTIDE SEQUENCE [LARGE SCALE GENOMIC DNA]</scope>
    <source>
        <strain>Tuc7</strain>
    </source>
</reference>
<dbReference type="EC" id="1.17.7.4" evidence="1"/>
<dbReference type="EMBL" id="CP001158">
    <property type="protein sequence ID" value="ACL29967.1"/>
    <property type="molecule type" value="Genomic_DNA"/>
</dbReference>
<dbReference type="RefSeq" id="WP_009874103.1">
    <property type="nucleotide sequence ID" value="NC_011834.1"/>
</dbReference>
<dbReference type="SMR" id="B8D752"/>
<dbReference type="KEGG" id="bau:BUAPTUC7_146"/>
<dbReference type="HOGENOM" id="CLU_027486_1_1_6"/>
<dbReference type="UniPathway" id="UPA00056">
    <property type="reaction ID" value="UER00097"/>
</dbReference>
<dbReference type="UniPathway" id="UPA00059">
    <property type="reaction ID" value="UER00105"/>
</dbReference>
<dbReference type="GO" id="GO:0051539">
    <property type="term" value="F:4 iron, 4 sulfur cluster binding"/>
    <property type="evidence" value="ECO:0007669"/>
    <property type="project" value="UniProtKB-UniRule"/>
</dbReference>
<dbReference type="GO" id="GO:0051745">
    <property type="term" value="F:4-hydroxy-3-methylbut-2-enyl diphosphate reductase activity"/>
    <property type="evidence" value="ECO:0007669"/>
    <property type="project" value="UniProtKB-UniRule"/>
</dbReference>
<dbReference type="GO" id="GO:0046872">
    <property type="term" value="F:metal ion binding"/>
    <property type="evidence" value="ECO:0007669"/>
    <property type="project" value="UniProtKB-KW"/>
</dbReference>
<dbReference type="GO" id="GO:0050992">
    <property type="term" value="P:dimethylallyl diphosphate biosynthetic process"/>
    <property type="evidence" value="ECO:0007669"/>
    <property type="project" value="UniProtKB-UniRule"/>
</dbReference>
<dbReference type="GO" id="GO:0019288">
    <property type="term" value="P:isopentenyl diphosphate biosynthetic process, methylerythritol 4-phosphate pathway"/>
    <property type="evidence" value="ECO:0007669"/>
    <property type="project" value="UniProtKB-UniRule"/>
</dbReference>
<dbReference type="GO" id="GO:0016114">
    <property type="term" value="P:terpenoid biosynthetic process"/>
    <property type="evidence" value="ECO:0007669"/>
    <property type="project" value="UniProtKB-UniRule"/>
</dbReference>
<dbReference type="CDD" id="cd13944">
    <property type="entry name" value="lytB_ispH"/>
    <property type="match status" value="1"/>
</dbReference>
<dbReference type="Gene3D" id="3.40.50.11270">
    <property type="match status" value="1"/>
</dbReference>
<dbReference type="Gene3D" id="3.40.1010.20">
    <property type="entry name" value="4-hydroxy-3-methylbut-2-enyl diphosphate reductase, catalytic domain"/>
    <property type="match status" value="2"/>
</dbReference>
<dbReference type="HAMAP" id="MF_00191">
    <property type="entry name" value="IspH"/>
    <property type="match status" value="1"/>
</dbReference>
<dbReference type="InterPro" id="IPR003451">
    <property type="entry name" value="LytB/IspH"/>
</dbReference>
<dbReference type="NCBIfam" id="TIGR00216">
    <property type="entry name" value="ispH_lytB"/>
    <property type="match status" value="1"/>
</dbReference>
<dbReference type="NCBIfam" id="NF002188">
    <property type="entry name" value="PRK01045.1-2"/>
    <property type="match status" value="1"/>
</dbReference>
<dbReference type="NCBIfam" id="NF002190">
    <property type="entry name" value="PRK01045.1-4"/>
    <property type="match status" value="1"/>
</dbReference>
<dbReference type="PANTHER" id="PTHR30426">
    <property type="entry name" value="4-HYDROXY-3-METHYLBUT-2-ENYL DIPHOSPHATE REDUCTASE"/>
    <property type="match status" value="1"/>
</dbReference>
<dbReference type="PANTHER" id="PTHR30426:SF0">
    <property type="entry name" value="4-HYDROXY-3-METHYLBUT-2-ENYL DIPHOSPHATE REDUCTASE"/>
    <property type="match status" value="1"/>
</dbReference>
<dbReference type="Pfam" id="PF02401">
    <property type="entry name" value="LYTB"/>
    <property type="match status" value="1"/>
</dbReference>
<gene>
    <name evidence="1" type="primary">ispH</name>
    <name type="ordered locus">BUAPTUC7_146</name>
</gene>
<sequence>MNIILTNPRGFCAGVKRAILIVENALKVYKKTIYIRHELVHNQYVINTLRQKGVVFVEKIEQIPDYSVVIFSAHGVSKKVVQEAVKKKLIILDATCPLVEKVHIEVSKSSEKAIETILIGHRGHPEVEGTIGQYNNKNGKIYLVESIEDVHNLSVQNSKKLNFFTQTTLSITNTKKIIAALKNKFPEISGPNKEDICYATTNRQIAVRQLSKIADIIFVIGSNNSSNSNRLAELGKETGTFTKLISSFLDIKKKWLKNVNYIGITAGASAPEILVTEVIQYLRKIGAHKPIEMIGVREKKIFKIPKKLLNIKTILDENG</sequence>
<protein>
    <recommendedName>
        <fullName evidence="1">4-hydroxy-3-methylbut-2-enyl diphosphate reductase</fullName>
        <shortName evidence="1">HMBPP reductase</shortName>
        <ecNumber evidence="1">1.17.7.4</ecNumber>
    </recommendedName>
</protein>
<accession>B8D752</accession>
<name>ISPH_BUCAT</name>
<keyword id="KW-0004">4Fe-4S</keyword>
<keyword id="KW-0408">Iron</keyword>
<keyword id="KW-0411">Iron-sulfur</keyword>
<keyword id="KW-0414">Isoprene biosynthesis</keyword>
<keyword id="KW-0479">Metal-binding</keyword>
<keyword id="KW-0560">Oxidoreductase</keyword>